<dbReference type="EMBL" id="CP000026">
    <property type="protein sequence ID" value="AAV78221.1"/>
    <property type="molecule type" value="Genomic_DNA"/>
</dbReference>
<dbReference type="RefSeq" id="WP_000158137.1">
    <property type="nucleotide sequence ID" value="NC_006511.1"/>
</dbReference>
<dbReference type="KEGG" id="spt:SPA2336"/>
<dbReference type="HOGENOM" id="CLU_106619_1_0_6"/>
<dbReference type="Proteomes" id="UP000008185">
    <property type="component" value="Chromosome"/>
</dbReference>
<dbReference type="CDD" id="cd18720">
    <property type="entry name" value="PIN_YqxD-like"/>
    <property type="match status" value="1"/>
</dbReference>
<dbReference type="HAMAP" id="MF_00489">
    <property type="entry name" value="UPF0178"/>
    <property type="match status" value="1"/>
</dbReference>
<dbReference type="InterPro" id="IPR003791">
    <property type="entry name" value="UPF0178"/>
</dbReference>
<dbReference type="NCBIfam" id="NF001095">
    <property type="entry name" value="PRK00124.1"/>
    <property type="match status" value="1"/>
</dbReference>
<dbReference type="PANTHER" id="PTHR35146">
    <property type="entry name" value="UPF0178 PROTEIN YAII"/>
    <property type="match status" value="1"/>
</dbReference>
<dbReference type="PANTHER" id="PTHR35146:SF1">
    <property type="entry name" value="UPF0178 PROTEIN YAII"/>
    <property type="match status" value="1"/>
</dbReference>
<dbReference type="Pfam" id="PF02639">
    <property type="entry name" value="DUF188"/>
    <property type="match status" value="1"/>
</dbReference>
<organism>
    <name type="scientific">Salmonella paratyphi A (strain ATCC 9150 / SARB42)</name>
    <dbReference type="NCBI Taxonomy" id="295319"/>
    <lineage>
        <taxon>Bacteria</taxon>
        <taxon>Pseudomonadati</taxon>
        <taxon>Pseudomonadota</taxon>
        <taxon>Gammaproteobacteria</taxon>
        <taxon>Enterobacterales</taxon>
        <taxon>Enterobacteriaceae</taxon>
        <taxon>Salmonella</taxon>
    </lineage>
</organism>
<sequence>MTIWVDADACPNVIKEILYRAAERMQLPLILVANQALRVPPSRFIRTLRVAAGFDVADNEIVRQCEAGDLVITADIPLAAEVLEKGAAALNPRGERYSDATIRERLTMRDFMDTLRASGVQTGGPNTLSPRDRQHFAAELDKWWLESQRKK</sequence>
<gene>
    <name evidence="1" type="primary">yaiI</name>
    <name type="ordered locus">SPA2336</name>
</gene>
<reference key="1">
    <citation type="journal article" date="2004" name="Nat. Genet.">
        <title>Comparison of genome degradation in Paratyphi A and Typhi, human-restricted serovars of Salmonella enterica that cause typhoid.</title>
        <authorList>
            <person name="McClelland M."/>
            <person name="Sanderson K.E."/>
            <person name="Clifton S.W."/>
            <person name="Latreille P."/>
            <person name="Porwollik S."/>
            <person name="Sabo A."/>
            <person name="Meyer R."/>
            <person name="Bieri T."/>
            <person name="Ozersky P."/>
            <person name="McLellan M."/>
            <person name="Harkins C.R."/>
            <person name="Wang C."/>
            <person name="Nguyen C."/>
            <person name="Berghoff A."/>
            <person name="Elliott G."/>
            <person name="Kohlberg S."/>
            <person name="Strong C."/>
            <person name="Du F."/>
            <person name="Carter J."/>
            <person name="Kremizki C."/>
            <person name="Layman D."/>
            <person name="Leonard S."/>
            <person name="Sun H."/>
            <person name="Fulton L."/>
            <person name="Nash W."/>
            <person name="Miner T."/>
            <person name="Minx P."/>
            <person name="Delehaunty K."/>
            <person name="Fronick C."/>
            <person name="Magrini V."/>
            <person name="Nhan M."/>
            <person name="Warren W."/>
            <person name="Florea L."/>
            <person name="Spieth J."/>
            <person name="Wilson R.K."/>
        </authorList>
    </citation>
    <scope>NUCLEOTIDE SEQUENCE [LARGE SCALE GENOMIC DNA]</scope>
    <source>
        <strain>ATCC 9150 / SARB42</strain>
    </source>
</reference>
<evidence type="ECO:0000255" key="1">
    <source>
        <dbReference type="HAMAP-Rule" id="MF_00489"/>
    </source>
</evidence>
<name>YAII_SALPA</name>
<proteinExistence type="inferred from homology"/>
<feature type="chain" id="PRO_0000176002" description="UPF0178 protein YaiI">
    <location>
        <begin position="1"/>
        <end position="151"/>
    </location>
</feature>
<accession>Q5PFV4</accession>
<comment type="similarity">
    <text evidence="1">Belongs to the UPF0178 family.</text>
</comment>
<protein>
    <recommendedName>
        <fullName evidence="1">UPF0178 protein YaiI</fullName>
    </recommendedName>
</protein>